<evidence type="ECO:0000250" key="1"/>
<evidence type="ECO:0000250" key="2">
    <source>
        <dbReference type="UniProtKB" id="P60301"/>
    </source>
</evidence>
<evidence type="ECO:0000250" key="3">
    <source>
        <dbReference type="UniProtKB" id="P60304"/>
    </source>
</evidence>
<evidence type="ECO:0000305" key="4"/>
<organism>
    <name type="scientific">Naja sputatrix</name>
    <name type="common">Malayan spitting cobra</name>
    <name type="synonym">Naja naja sputatrix</name>
    <dbReference type="NCBI Taxonomy" id="33626"/>
    <lineage>
        <taxon>Eukaryota</taxon>
        <taxon>Metazoa</taxon>
        <taxon>Chordata</taxon>
        <taxon>Craniata</taxon>
        <taxon>Vertebrata</taxon>
        <taxon>Euteleostomi</taxon>
        <taxon>Lepidosauria</taxon>
        <taxon>Squamata</taxon>
        <taxon>Bifurcata</taxon>
        <taxon>Unidentata</taxon>
        <taxon>Episquamata</taxon>
        <taxon>Toxicofera</taxon>
        <taxon>Serpentes</taxon>
        <taxon>Colubroidea</taxon>
        <taxon>Elapidae</taxon>
        <taxon>Elapinae</taxon>
        <taxon>Naja</taxon>
    </lineage>
</organism>
<name>3SA7_NAJSP</name>
<proteinExistence type="inferred from homology"/>
<reference key="1">
    <citation type="journal article" date="1998" name="FEBS Lett.">
        <title>Structure and organization of the cardiotoxin genes in Naja naja sputatrix.</title>
        <authorList>
            <person name="Lachumanan R."/>
            <person name="Armugam A."/>
            <person name="Tan C.H."/>
            <person name="Jeyaseelan K."/>
        </authorList>
    </citation>
    <scope>NUCLEOTIDE SEQUENCE [GENOMIC DNA]</scope>
    <source>
        <tissue>Liver</tissue>
    </source>
</reference>
<sequence length="62" mass="7062">YTLKCNKLVPLFYKTCPAGKNLCYKMFMMSNKTVPVKRGCIDVCPKNSALVKYVCCNTDRCN</sequence>
<protein>
    <recommendedName>
        <fullName>Cytotoxin 7</fullName>
    </recommendedName>
    <alternativeName>
        <fullName>Cardiotoxin-7</fullName>
        <shortName>CTX-7</shortName>
        <shortName>Ctx7</shortName>
    </alternativeName>
</protein>
<comment type="function">
    <text evidence="2 3">Shows cytolytic activity on many different cells by forming pore in lipid membranes. In vivo, increases heart rate or kills the animal by cardiac arrest. In addition, it binds to heparin with high affinity, interacts with Kv channel-interacting protein 1 (KCNIP1) in a calcium-independent manner, and binds to integrin alpha-V/beta-3 (ITGAV/ITGB3) with moderate affinity.</text>
</comment>
<comment type="subunit">
    <text evidence="2">Monomer in solution; Homodimer and oligomer in the presence of negatively charged lipids forming a pore with a size ranging between 20 and 30 Angstroms.</text>
</comment>
<comment type="subcellular location">
    <subcellularLocation>
        <location evidence="1">Secreted</location>
    </subcellularLocation>
    <subcellularLocation>
        <location evidence="2">Target cell membrane</location>
    </subcellularLocation>
</comment>
<comment type="tissue specificity">
    <text evidence="4">Expressed by the venom gland.</text>
</comment>
<comment type="miscellaneous">
    <text evidence="4">Is classified as a S-type cytotoxin, since a serine residue stands at position 30 (Ser-29 in standard classification).</text>
</comment>
<comment type="similarity">
    <text evidence="4">Belongs to the three-finger toxin family. Short-chain subfamily. Type IA cytotoxin sub-subfamily.</text>
</comment>
<feature type="signal peptide" evidence="1">
    <location>
        <begin position="1" status="less than"/>
        <end position="2"/>
    </location>
</feature>
<feature type="chain" id="PRO_0000035403" description="Cytotoxin 7">
    <location>
        <begin position="3"/>
        <end position="62"/>
    </location>
</feature>
<feature type="disulfide bond" evidence="2">
    <location>
        <begin position="5"/>
        <end position="23"/>
    </location>
</feature>
<feature type="disulfide bond" evidence="2">
    <location>
        <begin position="16"/>
        <end position="40"/>
    </location>
</feature>
<feature type="disulfide bond" evidence="2">
    <location>
        <begin position="44"/>
        <end position="55"/>
    </location>
</feature>
<feature type="disulfide bond" evidence="2">
    <location>
        <begin position="56"/>
        <end position="61"/>
    </location>
</feature>
<feature type="non-terminal residue">
    <location>
        <position position="1"/>
    </location>
</feature>
<accession>O73859</accession>
<keyword id="KW-0123">Cardiotoxin</keyword>
<keyword id="KW-0204">Cytolysis</keyword>
<keyword id="KW-1015">Disulfide bond</keyword>
<keyword id="KW-0472">Membrane</keyword>
<keyword id="KW-0964">Secreted</keyword>
<keyword id="KW-0732">Signal</keyword>
<keyword id="KW-1052">Target cell membrane</keyword>
<keyword id="KW-1053">Target membrane</keyword>
<keyword id="KW-0800">Toxin</keyword>
<dbReference type="EMBL" id="AF064101">
    <property type="protein sequence ID" value="AAC61319.1"/>
    <property type="molecule type" value="Genomic_DNA"/>
</dbReference>
<dbReference type="SMR" id="O73859"/>
<dbReference type="GO" id="GO:0005576">
    <property type="term" value="C:extracellular region"/>
    <property type="evidence" value="ECO:0007669"/>
    <property type="project" value="UniProtKB-SubCell"/>
</dbReference>
<dbReference type="GO" id="GO:0016020">
    <property type="term" value="C:membrane"/>
    <property type="evidence" value="ECO:0007669"/>
    <property type="project" value="UniProtKB-KW"/>
</dbReference>
<dbReference type="GO" id="GO:0044218">
    <property type="term" value="C:other organism cell membrane"/>
    <property type="evidence" value="ECO:0007669"/>
    <property type="project" value="UniProtKB-KW"/>
</dbReference>
<dbReference type="GO" id="GO:0090729">
    <property type="term" value="F:toxin activity"/>
    <property type="evidence" value="ECO:0007669"/>
    <property type="project" value="UniProtKB-KW"/>
</dbReference>
<dbReference type="GO" id="GO:0031640">
    <property type="term" value="P:killing of cells of another organism"/>
    <property type="evidence" value="ECO:0007669"/>
    <property type="project" value="UniProtKB-KW"/>
</dbReference>
<dbReference type="CDD" id="cd00206">
    <property type="entry name" value="TFP_snake_toxin"/>
    <property type="match status" value="1"/>
</dbReference>
<dbReference type="FunFam" id="2.10.60.10:FF:000024">
    <property type="entry name" value="Cytotoxin 1"/>
    <property type="match status" value="1"/>
</dbReference>
<dbReference type="Gene3D" id="2.10.60.10">
    <property type="entry name" value="CD59"/>
    <property type="match status" value="1"/>
</dbReference>
<dbReference type="InterPro" id="IPR003572">
    <property type="entry name" value="Cytotoxin_Cobra"/>
</dbReference>
<dbReference type="InterPro" id="IPR003571">
    <property type="entry name" value="Snake_3FTx"/>
</dbReference>
<dbReference type="InterPro" id="IPR045860">
    <property type="entry name" value="Snake_toxin-like_sf"/>
</dbReference>
<dbReference type="InterPro" id="IPR018354">
    <property type="entry name" value="Snake_toxin_con_site"/>
</dbReference>
<dbReference type="InterPro" id="IPR054131">
    <property type="entry name" value="Toxin_cobra-type"/>
</dbReference>
<dbReference type="Pfam" id="PF21947">
    <property type="entry name" value="Toxin_cobra-type"/>
    <property type="match status" value="1"/>
</dbReference>
<dbReference type="PRINTS" id="PR00282">
    <property type="entry name" value="CYTOTOXIN"/>
</dbReference>
<dbReference type="SUPFAM" id="SSF57302">
    <property type="entry name" value="Snake toxin-like"/>
    <property type="match status" value="1"/>
</dbReference>
<dbReference type="PROSITE" id="PS00272">
    <property type="entry name" value="SNAKE_TOXIN"/>
    <property type="match status" value="1"/>
</dbReference>